<name>COGS_LEPPG</name>
<comment type="function">
    <text>This enzyme is a serine protease capable of degrading the native triple helix of collagen.</text>
</comment>
<comment type="catalytic activity">
    <reaction>
        <text>Hydrolysis of proteins, with broad specificity for peptide bonds. Native collagen is cleaved about 75% of the length of the molecule from the N-terminus. Low activity on small molecule substrates of both trypsin and chymotrypsin.</text>
        <dbReference type="EC" id="3.4.21.32"/>
    </reaction>
</comment>
<comment type="similarity">
    <text evidence="1">Belongs to the peptidase S1 family.</text>
</comment>
<accession>P00771</accession>
<evidence type="ECO:0000255" key="1">
    <source>
        <dbReference type="PROSITE-ProRule" id="PRU00274"/>
    </source>
</evidence>
<evidence type="ECO:0000305" key="2"/>
<evidence type="ECO:0007829" key="3">
    <source>
        <dbReference type="PDB" id="1AZZ"/>
    </source>
</evidence>
<feature type="chain" id="PRO_0000088664" description="Brachyurin">
    <location>
        <begin position="1"/>
        <end position="226"/>
    </location>
</feature>
<feature type="domain" description="Peptidase S1" evidence="1">
    <location>
        <begin position="1"/>
        <end position="223"/>
    </location>
</feature>
<feature type="active site" description="Charge relay system">
    <location>
        <position position="41"/>
    </location>
</feature>
<feature type="active site" description="Charge relay system">
    <location>
        <position position="87"/>
    </location>
</feature>
<feature type="active site" description="Charge relay system">
    <location>
        <position position="178"/>
    </location>
</feature>
<feature type="disulfide bond">
    <location>
        <begin position="26"/>
        <end position="42"/>
    </location>
</feature>
<feature type="disulfide bond">
    <location>
        <begin position="151"/>
        <end position="164"/>
    </location>
</feature>
<feature type="disulfide bond">
    <location>
        <begin position="174"/>
        <end position="200"/>
    </location>
</feature>
<feature type="sequence conflict" description="In Ref. 1; AA sequence." evidence="2" ref="1">
    <original>I</original>
    <variation>V</variation>
    <location>
        <position position="91"/>
    </location>
</feature>
<feature type="sequence conflict" description="In Ref. 1; AA sequence." evidence="2" ref="1">
    <original>SN</original>
    <variation>NS</variation>
    <location>
        <begin position="147"/>
        <end position="148"/>
    </location>
</feature>
<feature type="sequence conflict" description="In Ref. 1; AA sequence." evidence="2" ref="1">
    <original>N</original>
    <variation>D</variation>
    <location>
        <position position="175"/>
    </location>
</feature>
<feature type="sequence conflict" description="In Ref. 1; AA sequence." evidence="2" ref="1">
    <original>N</original>
    <variation>D</variation>
    <location>
        <position position="185"/>
    </location>
</feature>
<feature type="strand" evidence="3">
    <location>
        <begin position="15"/>
        <end position="20"/>
    </location>
</feature>
<feature type="turn" evidence="3">
    <location>
        <begin position="21"/>
        <end position="23"/>
    </location>
</feature>
<feature type="strand" evidence="3">
    <location>
        <begin position="24"/>
        <end position="32"/>
    </location>
</feature>
<feature type="strand" evidence="3">
    <location>
        <begin position="35"/>
        <end position="38"/>
    </location>
</feature>
<feature type="helix" evidence="3">
    <location>
        <begin position="40"/>
        <end position="43"/>
    </location>
</feature>
<feature type="strand" evidence="3">
    <location>
        <begin position="49"/>
        <end position="54"/>
    </location>
</feature>
<feature type="strand" evidence="3">
    <location>
        <begin position="56"/>
        <end position="60"/>
    </location>
</feature>
<feature type="strand" evidence="3">
    <location>
        <begin position="66"/>
        <end position="70"/>
    </location>
</feature>
<feature type="strand" evidence="3">
    <location>
        <begin position="73"/>
        <end position="75"/>
    </location>
</feature>
<feature type="turn" evidence="3">
    <location>
        <begin position="81"/>
        <end position="84"/>
    </location>
</feature>
<feature type="strand" evidence="3">
    <location>
        <begin position="89"/>
        <end position="92"/>
    </location>
</feature>
<feature type="strand" evidence="3">
    <location>
        <begin position="101"/>
        <end position="103"/>
    </location>
</feature>
<feature type="strand" evidence="3">
    <location>
        <begin position="118"/>
        <end position="125"/>
    </location>
</feature>
<feature type="strand" evidence="3">
    <location>
        <begin position="132"/>
        <end position="134"/>
    </location>
</feature>
<feature type="strand" evidence="3">
    <location>
        <begin position="143"/>
        <end position="146"/>
    </location>
</feature>
<feature type="helix" evidence="3">
    <location>
        <begin position="148"/>
        <end position="155"/>
    </location>
</feature>
<feature type="strand" evidence="3">
    <location>
        <begin position="162"/>
        <end position="165"/>
    </location>
</feature>
<feature type="turn" evidence="3">
    <location>
        <begin position="168"/>
        <end position="170"/>
    </location>
</feature>
<feature type="strand" evidence="3">
    <location>
        <begin position="181"/>
        <end position="184"/>
    </location>
</feature>
<feature type="strand" evidence="3">
    <location>
        <begin position="187"/>
        <end position="196"/>
    </location>
</feature>
<feature type="strand" evidence="3">
    <location>
        <begin position="206"/>
        <end position="211"/>
    </location>
</feature>
<feature type="helix" evidence="3">
    <location>
        <begin position="212"/>
        <end position="214"/>
    </location>
</feature>
<feature type="helix" evidence="3">
    <location>
        <begin position="215"/>
        <end position="222"/>
    </location>
</feature>
<sequence>IVGGVEAVPNSWPHQAALFIDDMYFCGGSLISPEWILTAAHCMDGAGFVDVVLGAHNIREDEATQVTIQSTDFTVHENYNSFVISNDIAVIRLPVPVTLTAAIATVGLPSTDVGVGTVVTPTGWGLPSDSALGISDVLRQVDVPIMSNADCDAVYGIVTDGNICIDSTGGKGTCNGDSGGPLNYNGLTYGITSFGAAAGCEAGYPDAFTRVTYFLDWIQTQTGITP</sequence>
<protein>
    <recommendedName>
        <fullName>Brachyurin</fullName>
        <ecNumber>3.4.21.32</ecNumber>
    </recommendedName>
    <alternativeName>
        <fullName>Collagenolytic protease</fullName>
    </alternativeName>
</protein>
<dbReference type="EC" id="3.4.21.32"/>
<dbReference type="PIR" id="A00958">
    <property type="entry name" value="KCUF"/>
</dbReference>
<dbReference type="PDB" id="1AZZ">
    <property type="method" value="X-ray"/>
    <property type="resolution" value="2.30 A"/>
    <property type="chains" value="A/B=1-226"/>
</dbReference>
<dbReference type="PDBsum" id="1AZZ"/>
<dbReference type="SMR" id="P00771"/>
<dbReference type="MEROPS" id="S01.122"/>
<dbReference type="EvolutionaryTrace" id="P00771"/>
<dbReference type="GO" id="GO:0004252">
    <property type="term" value="F:serine-type endopeptidase activity"/>
    <property type="evidence" value="ECO:0007669"/>
    <property type="project" value="InterPro"/>
</dbReference>
<dbReference type="GO" id="GO:0030574">
    <property type="term" value="P:collagen catabolic process"/>
    <property type="evidence" value="ECO:0007669"/>
    <property type="project" value="UniProtKB-KW"/>
</dbReference>
<dbReference type="GO" id="GO:0006508">
    <property type="term" value="P:proteolysis"/>
    <property type="evidence" value="ECO:0007669"/>
    <property type="project" value="UniProtKB-KW"/>
</dbReference>
<dbReference type="CDD" id="cd00190">
    <property type="entry name" value="Tryp_SPc"/>
    <property type="match status" value="1"/>
</dbReference>
<dbReference type="FunFam" id="2.40.10.10:FF:000034">
    <property type="entry name" value="Eupolytin"/>
    <property type="match status" value="1"/>
</dbReference>
<dbReference type="Gene3D" id="2.40.10.10">
    <property type="entry name" value="Trypsin-like serine proteases"/>
    <property type="match status" value="2"/>
</dbReference>
<dbReference type="InterPro" id="IPR050430">
    <property type="entry name" value="Peptidase_S1"/>
</dbReference>
<dbReference type="InterPro" id="IPR009003">
    <property type="entry name" value="Peptidase_S1_PA"/>
</dbReference>
<dbReference type="InterPro" id="IPR043504">
    <property type="entry name" value="Peptidase_S1_PA_chymotrypsin"/>
</dbReference>
<dbReference type="InterPro" id="IPR001314">
    <property type="entry name" value="Peptidase_S1A"/>
</dbReference>
<dbReference type="InterPro" id="IPR001254">
    <property type="entry name" value="Trypsin_dom"/>
</dbReference>
<dbReference type="InterPro" id="IPR018114">
    <property type="entry name" value="TRYPSIN_HIS"/>
</dbReference>
<dbReference type="InterPro" id="IPR033116">
    <property type="entry name" value="TRYPSIN_SER"/>
</dbReference>
<dbReference type="PANTHER" id="PTHR24276:SF91">
    <property type="entry name" value="AT26814P-RELATED"/>
    <property type="match status" value="1"/>
</dbReference>
<dbReference type="PANTHER" id="PTHR24276">
    <property type="entry name" value="POLYSERASE-RELATED"/>
    <property type="match status" value="1"/>
</dbReference>
<dbReference type="Pfam" id="PF00089">
    <property type="entry name" value="Trypsin"/>
    <property type="match status" value="1"/>
</dbReference>
<dbReference type="PRINTS" id="PR00722">
    <property type="entry name" value="CHYMOTRYPSIN"/>
</dbReference>
<dbReference type="SMART" id="SM00020">
    <property type="entry name" value="Tryp_SPc"/>
    <property type="match status" value="1"/>
</dbReference>
<dbReference type="SUPFAM" id="SSF50494">
    <property type="entry name" value="Trypsin-like serine proteases"/>
    <property type="match status" value="1"/>
</dbReference>
<dbReference type="PROSITE" id="PS50240">
    <property type="entry name" value="TRYPSIN_DOM"/>
    <property type="match status" value="1"/>
</dbReference>
<dbReference type="PROSITE" id="PS00134">
    <property type="entry name" value="TRYPSIN_HIS"/>
    <property type="match status" value="1"/>
</dbReference>
<dbReference type="PROSITE" id="PS00135">
    <property type="entry name" value="TRYPSIN_SER"/>
    <property type="match status" value="1"/>
</dbReference>
<keyword id="KW-0002">3D-structure</keyword>
<keyword id="KW-0177">Collagen degradation</keyword>
<keyword id="KW-0903">Direct protein sequencing</keyword>
<keyword id="KW-1015">Disulfide bond</keyword>
<keyword id="KW-0378">Hydrolase</keyword>
<keyword id="KW-0645">Protease</keyword>
<keyword id="KW-0720">Serine protease</keyword>
<organism>
    <name type="scientific">Leptuca pugilator</name>
    <name type="common">Atlantic sand fiddler crab</name>
    <name type="synonym">Uca pugilator</name>
    <dbReference type="NCBI Taxonomy" id="6772"/>
    <lineage>
        <taxon>Eukaryota</taxon>
        <taxon>Metazoa</taxon>
        <taxon>Ecdysozoa</taxon>
        <taxon>Arthropoda</taxon>
        <taxon>Crustacea</taxon>
        <taxon>Multicrustacea</taxon>
        <taxon>Malacostraca</taxon>
        <taxon>Eumalacostraca</taxon>
        <taxon>Eucarida</taxon>
        <taxon>Decapoda</taxon>
        <taxon>Pleocyemata</taxon>
        <taxon>Brachyura</taxon>
        <taxon>Eubrachyura</taxon>
        <taxon>Ocypodoidea</taxon>
        <taxon>Ocypodidae</taxon>
        <taxon>Gelasiminae</taxon>
        <taxon>Leptuca</taxon>
    </lineage>
</organism>
<proteinExistence type="evidence at protein level"/>
<reference key="1">
    <citation type="journal article" date="1980" name="Biochemistry">
        <title>Amino acid sequence of a collagenolytic protease from the hepatopancreas of the fiddler crab, Uca pugilator.</title>
        <authorList>
            <person name="Grant G.A."/>
            <person name="Henderson K.O."/>
            <person name="Eisen A.Z."/>
            <person name="Bradshaw R.A."/>
        </authorList>
    </citation>
    <scope>PROTEIN SEQUENCE</scope>
    <source>
        <tissue>Hepatopancreas</tissue>
    </source>
</reference>
<reference key="2">
    <citation type="journal article" date="1997" name="Biochemistry">
        <title>Crystal structure of an ecotin-collagenase complex suggests a model for recognition and cleavage of the collagen triple helix.</title>
        <authorList>
            <person name="Perona J.J."/>
            <person name="Tsu C.A."/>
            <person name="Craik C.S."/>
            <person name="Fletterick R.J."/>
        </authorList>
    </citation>
    <scope>X-RAY CRYSTALLOGRAPHY (2.3 ANGSTROMS)</scope>
    <scope>SEQUENCE REVISION</scope>
    <source>
        <tissue>Hepatopancreas</tissue>
    </source>
</reference>